<feature type="signal peptide" evidence="1">
    <location>
        <begin position="1"/>
        <end position="23"/>
    </location>
</feature>
<feature type="chain" id="PRO_0000016439" description="Interferon gamma">
    <location>
        <begin position="24"/>
        <end position="166"/>
    </location>
</feature>
<feature type="modified residue" description="Pyrrolidone carboxylic acid" evidence="2">
    <location>
        <position position="24"/>
    </location>
</feature>
<feature type="glycosylation site" description="N-linked (GlcNAc...) asparagine" evidence="4">
    <location>
        <position position="39"/>
    </location>
</feature>
<feature type="glycosylation site" description="N-linked (GlcNAc...) asparagine" evidence="4">
    <location>
        <position position="106"/>
    </location>
</feature>
<feature type="sequence conflict" description="In Ref. 2; AAA30824." evidence="5" ref="2">
    <original>M</original>
    <variation>L</variation>
    <location>
        <position position="126"/>
    </location>
</feature>
<feature type="sequence conflict" description="In Ref. 2; AAA30824." evidence="5" ref="2">
    <original>I</original>
    <variation>R</variation>
    <location>
        <position position="150"/>
    </location>
</feature>
<feature type="sequence conflict" description="In Ref. 2; AAA30824." evidence="5" ref="2">
    <original>M</original>
    <variation>T</variation>
    <location>
        <position position="166"/>
    </location>
</feature>
<reference key="1">
    <citation type="submission" date="1991-10" db="EMBL/GenBank/DDBJ databases">
        <authorList>
            <person name="McInnes C.J."/>
            <person name="Logan M."/>
            <person name="Burrells C."/>
        </authorList>
    </citation>
    <scope>NUCLEOTIDE SEQUENCE [MRNA]</scope>
</reference>
<reference key="2">
    <citation type="submission" date="1992-12" db="EMBL/GenBank/DDBJ databases">
        <authorList>
            <person name="Slobbe L.J."/>
            <person name="Crawford A.M."/>
            <person name="Griffin J.F."/>
            <person name="Buchan G."/>
        </authorList>
    </citation>
    <scope>NUCLEOTIDE SEQUENCE [MRNA]</scope>
</reference>
<proteinExistence type="evidence at transcript level"/>
<protein>
    <recommendedName>
        <fullName>Interferon gamma</fullName>
        <shortName>IFN-gamma</shortName>
    </recommendedName>
</protein>
<name>IFNG_CEREL</name>
<sequence>MKYTSYILALQLCVLLGFSGSYGQGPFFKEIENLKEYFNASNPDVAEGGPLFIEILKNWKEESDRKIIQSQIVSFYFKLFENFKDNQVIQRSVDIIKQDMFQKFLNGSSEKLEDFKKLIQISVDDMQIQRKAINELIKVMNDLSPKSNLIKRKRSQNLFRGRRASM</sequence>
<gene>
    <name type="primary">IFNG</name>
</gene>
<keyword id="KW-0051">Antiviral defense</keyword>
<keyword id="KW-0202">Cytokine</keyword>
<keyword id="KW-0325">Glycoprotein</keyword>
<keyword id="KW-0341">Growth regulation</keyword>
<keyword id="KW-0873">Pyrrolidone carboxylic acid</keyword>
<keyword id="KW-0964">Secreted</keyword>
<keyword id="KW-0732">Signal</keyword>
<evidence type="ECO:0000250" key="1"/>
<evidence type="ECO:0000250" key="2">
    <source>
        <dbReference type="UniProtKB" id="P01579"/>
    </source>
</evidence>
<evidence type="ECO:0000250" key="3">
    <source>
        <dbReference type="UniProtKB" id="P01580"/>
    </source>
</evidence>
<evidence type="ECO:0000255" key="4"/>
<evidence type="ECO:0000305" key="5"/>
<organism>
    <name type="scientific">Cervus elaphus</name>
    <name type="common">Red deer</name>
    <dbReference type="NCBI Taxonomy" id="9860"/>
    <lineage>
        <taxon>Eukaryota</taxon>
        <taxon>Metazoa</taxon>
        <taxon>Chordata</taxon>
        <taxon>Craniata</taxon>
        <taxon>Vertebrata</taxon>
        <taxon>Euteleostomi</taxon>
        <taxon>Mammalia</taxon>
        <taxon>Eutheria</taxon>
        <taxon>Laurasiatheria</taxon>
        <taxon>Artiodactyla</taxon>
        <taxon>Ruminantia</taxon>
        <taxon>Pecora</taxon>
        <taxon>Cervidae</taxon>
        <taxon>Cervinae</taxon>
        <taxon>Cervus</taxon>
    </lineage>
</organism>
<accession>P28333</accession>
<comment type="function">
    <text evidence="2 3">Type II interferon produced by immune cells such as T-cells and NK cells that plays crucial roles in antimicrobial, antiviral, and antitumor responses by activating effector immune cells and enhancing antigen presentation. Primarily signals through the JAK-STAT pathway after interaction with its receptor IFNGR1 to affect gene regulation. Upon IFNG binding, IFNGR1 intracellular domain opens out to allow association of downstream signaling components JAK2, JAK1 and STAT1, leading to STAT1 activation, nuclear translocation and transcription of IFNG-regulated genes. Many of the induced genes are transcription factors such as IRF1 that are able to further drive regulation of a next wave of transcription. Plays a role in class I antigen presentation pathway by inducing a replacement of catalytic proteasome subunits with immunoproteasome subunits. In turn, increases the quantity, quality, and repertoire of peptides for class I MHC loading. Increases the efficiency of peptide generation also by inducing the expression of activator PA28 that associates with the proteasome and alters its proteolytic cleavage preference. Up-regulates as well MHC II complexes on the cell surface by promoting expression of several key molecules such as cathepsins B/CTSB, H/CTSH, and L/CTSL (By similarity). Participates in the regulation of hematopoietic stem cells during development and under homeostatic conditions by affecting their development, quiescence, and differentiation (By similarity).</text>
</comment>
<comment type="subunit">
    <text evidence="2">Homodimer. Interacts with IFNGR1 (via extracellular domain); this interaction promotes IFNGR1 dimerization.</text>
</comment>
<comment type="subcellular location">
    <subcellularLocation>
        <location evidence="2">Secreted</location>
    </subcellularLocation>
</comment>
<comment type="tissue specificity">
    <text>Released primarily from activated T lymphocytes.</text>
</comment>
<comment type="similarity">
    <text evidence="5">Belongs to the type II (or gamma) interferon family.</text>
</comment>
<dbReference type="EMBL" id="X63079">
    <property type="protein sequence ID" value="CAA44801.1"/>
    <property type="molecule type" value="mRNA"/>
</dbReference>
<dbReference type="EMBL" id="L07502">
    <property type="protein sequence ID" value="AAA30824.1"/>
    <property type="molecule type" value="mRNA"/>
</dbReference>
<dbReference type="PIR" id="S18120">
    <property type="entry name" value="S18120"/>
</dbReference>
<dbReference type="SMR" id="P28333"/>
<dbReference type="GlyCosmos" id="P28333">
    <property type="glycosylation" value="2 sites, No reported glycans"/>
</dbReference>
<dbReference type="GO" id="GO:0005615">
    <property type="term" value="C:extracellular space"/>
    <property type="evidence" value="ECO:0007669"/>
    <property type="project" value="UniProtKB-KW"/>
</dbReference>
<dbReference type="GO" id="GO:0005125">
    <property type="term" value="F:cytokine activity"/>
    <property type="evidence" value="ECO:0007669"/>
    <property type="project" value="UniProtKB-KW"/>
</dbReference>
<dbReference type="GO" id="GO:0005133">
    <property type="term" value="F:type II interferon receptor binding"/>
    <property type="evidence" value="ECO:0007669"/>
    <property type="project" value="InterPro"/>
</dbReference>
<dbReference type="GO" id="GO:0002250">
    <property type="term" value="P:adaptive immune response"/>
    <property type="evidence" value="ECO:0007669"/>
    <property type="project" value="TreeGrafter"/>
</dbReference>
<dbReference type="GO" id="GO:0051607">
    <property type="term" value="P:defense response to virus"/>
    <property type="evidence" value="ECO:0007669"/>
    <property type="project" value="UniProtKB-KW"/>
</dbReference>
<dbReference type="GO" id="GO:0006959">
    <property type="term" value="P:humoral immune response"/>
    <property type="evidence" value="ECO:0007669"/>
    <property type="project" value="TreeGrafter"/>
</dbReference>
<dbReference type="GO" id="GO:0010508">
    <property type="term" value="P:positive regulation of autophagy"/>
    <property type="evidence" value="ECO:0000250"/>
    <property type="project" value="UniProtKB"/>
</dbReference>
<dbReference type="FunFam" id="1.20.1250.10:FF:000080">
    <property type="entry name" value="Interferon gamma"/>
    <property type="match status" value="1"/>
</dbReference>
<dbReference type="Gene3D" id="1.20.1250.10">
    <property type="match status" value="1"/>
</dbReference>
<dbReference type="InterPro" id="IPR009079">
    <property type="entry name" value="4_helix_cytokine-like_core"/>
</dbReference>
<dbReference type="InterPro" id="IPR002069">
    <property type="entry name" value="Interferon_gamma"/>
</dbReference>
<dbReference type="PANTHER" id="PTHR11419">
    <property type="entry name" value="INTERFERON GAMMA"/>
    <property type="match status" value="1"/>
</dbReference>
<dbReference type="PANTHER" id="PTHR11419:SF0">
    <property type="entry name" value="INTERFERON GAMMA"/>
    <property type="match status" value="1"/>
</dbReference>
<dbReference type="Pfam" id="PF00714">
    <property type="entry name" value="IFN-gamma"/>
    <property type="match status" value="1"/>
</dbReference>
<dbReference type="PIRSF" id="PIRSF001936">
    <property type="entry name" value="IFN-gamma"/>
    <property type="match status" value="1"/>
</dbReference>
<dbReference type="SUPFAM" id="SSF47266">
    <property type="entry name" value="4-helical cytokines"/>
    <property type="match status" value="1"/>
</dbReference>